<sequence>MQIKIKYLDETQTRINKMEQGDWIDLRAAEDVAIKKDEFKLVPLGVAMELPEGYEAHVVPRSSTYKNFGVIQTNSMGVIDESYKGDNDFWFFPAYALRDTKIKKGDRICQFRIMKKMPAVDLIEVDRLGNGDRGGHGSTGTK</sequence>
<accession>O34919</accession>
<accession>Q7BVP9</accession>
<evidence type="ECO:0000269" key="1">
    <source>
    </source>
</evidence>
<evidence type="ECO:0000269" key="2">
    <source>
    </source>
</evidence>
<evidence type="ECO:0000269" key="3">
    <source>
    </source>
</evidence>
<evidence type="ECO:0000269" key="4">
    <source>
    </source>
</evidence>
<evidence type="ECO:0000269" key="5">
    <source>
    </source>
</evidence>
<evidence type="ECO:0000303" key="6">
    <source>
    </source>
</evidence>
<evidence type="ECO:0000305" key="7"/>
<evidence type="ECO:0000305" key="8">
    <source>
    </source>
</evidence>
<evidence type="ECO:0000305" key="9">
    <source>
    </source>
</evidence>
<evidence type="ECO:0007744" key="10">
    <source>
        <dbReference type="PDB" id="2XX6"/>
    </source>
</evidence>
<evidence type="ECO:0007744" key="11">
    <source>
        <dbReference type="PDB" id="2XY3"/>
    </source>
</evidence>
<evidence type="ECO:0007744" key="12">
    <source>
        <dbReference type="PDB" id="2Y1T"/>
    </source>
</evidence>
<evidence type="ECO:0007744" key="13">
    <source>
        <dbReference type="PDB" id="4AO5"/>
    </source>
</evidence>
<evidence type="ECO:0007829" key="14">
    <source>
        <dbReference type="PDB" id="4AO5"/>
    </source>
</evidence>
<organism>
    <name type="scientific">Bacillus subtilis (strain 168)</name>
    <dbReference type="NCBI Taxonomy" id="224308"/>
    <lineage>
        <taxon>Bacteria</taxon>
        <taxon>Bacillati</taxon>
        <taxon>Bacillota</taxon>
        <taxon>Bacilli</taxon>
        <taxon>Bacillales</taxon>
        <taxon>Bacillaceae</taxon>
        <taxon>Bacillus</taxon>
    </lineage>
</organism>
<reference key="1">
    <citation type="journal article" date="1998" name="DNA Res.">
        <title>An 8 kb nucleotide sequence at the 3' flanking region of the sspC gene (184 degrees) on the Bacillus subtilis 168 chromosome containing an intein and an intron.</title>
        <authorList>
            <person name="Ghim S.-Y."/>
            <person name="Choi S.-K."/>
            <person name="Shin B.-S."/>
            <person name="Park S.-H."/>
        </authorList>
    </citation>
    <scope>NUCLEOTIDE SEQUENCE [GENOMIC DNA]</scope>
    <source>
        <strain>168</strain>
    </source>
</reference>
<reference key="2">
    <citation type="journal article" date="1997" name="Nature">
        <title>The complete genome sequence of the Gram-positive bacterium Bacillus subtilis.</title>
        <authorList>
            <person name="Kunst F."/>
            <person name="Ogasawara N."/>
            <person name="Moszer I."/>
            <person name="Albertini A.M."/>
            <person name="Alloni G."/>
            <person name="Azevedo V."/>
            <person name="Bertero M.G."/>
            <person name="Bessieres P."/>
            <person name="Bolotin A."/>
            <person name="Borchert S."/>
            <person name="Borriss R."/>
            <person name="Boursier L."/>
            <person name="Brans A."/>
            <person name="Braun M."/>
            <person name="Brignell S.C."/>
            <person name="Bron S."/>
            <person name="Brouillet S."/>
            <person name="Bruschi C.V."/>
            <person name="Caldwell B."/>
            <person name="Capuano V."/>
            <person name="Carter N.M."/>
            <person name="Choi S.-K."/>
            <person name="Codani J.-J."/>
            <person name="Connerton I.F."/>
            <person name="Cummings N.J."/>
            <person name="Daniel R.A."/>
            <person name="Denizot F."/>
            <person name="Devine K.M."/>
            <person name="Duesterhoeft A."/>
            <person name="Ehrlich S.D."/>
            <person name="Emmerson P.T."/>
            <person name="Entian K.-D."/>
            <person name="Errington J."/>
            <person name="Fabret C."/>
            <person name="Ferrari E."/>
            <person name="Foulger D."/>
            <person name="Fritz C."/>
            <person name="Fujita M."/>
            <person name="Fujita Y."/>
            <person name="Fuma S."/>
            <person name="Galizzi A."/>
            <person name="Galleron N."/>
            <person name="Ghim S.-Y."/>
            <person name="Glaser P."/>
            <person name="Goffeau A."/>
            <person name="Golightly E.J."/>
            <person name="Grandi G."/>
            <person name="Guiseppi G."/>
            <person name="Guy B.J."/>
            <person name="Haga K."/>
            <person name="Haiech J."/>
            <person name="Harwood C.R."/>
            <person name="Henaut A."/>
            <person name="Hilbert H."/>
            <person name="Holsappel S."/>
            <person name="Hosono S."/>
            <person name="Hullo M.-F."/>
            <person name="Itaya M."/>
            <person name="Jones L.-M."/>
            <person name="Joris B."/>
            <person name="Karamata D."/>
            <person name="Kasahara Y."/>
            <person name="Klaerr-Blanchard M."/>
            <person name="Klein C."/>
            <person name="Kobayashi Y."/>
            <person name="Koetter P."/>
            <person name="Koningstein G."/>
            <person name="Krogh S."/>
            <person name="Kumano M."/>
            <person name="Kurita K."/>
            <person name="Lapidus A."/>
            <person name="Lardinois S."/>
            <person name="Lauber J."/>
            <person name="Lazarevic V."/>
            <person name="Lee S.-M."/>
            <person name="Levine A."/>
            <person name="Liu H."/>
            <person name="Masuda S."/>
            <person name="Mauel C."/>
            <person name="Medigue C."/>
            <person name="Medina N."/>
            <person name="Mellado R.P."/>
            <person name="Mizuno M."/>
            <person name="Moestl D."/>
            <person name="Nakai S."/>
            <person name="Noback M."/>
            <person name="Noone D."/>
            <person name="O'Reilly M."/>
            <person name="Ogawa K."/>
            <person name="Ogiwara A."/>
            <person name="Oudega B."/>
            <person name="Park S.-H."/>
            <person name="Parro V."/>
            <person name="Pohl T.M."/>
            <person name="Portetelle D."/>
            <person name="Porwollik S."/>
            <person name="Prescott A.M."/>
            <person name="Presecan E."/>
            <person name="Pujic P."/>
            <person name="Purnelle B."/>
            <person name="Rapoport G."/>
            <person name="Rey M."/>
            <person name="Reynolds S."/>
            <person name="Rieger M."/>
            <person name="Rivolta C."/>
            <person name="Rocha E."/>
            <person name="Roche B."/>
            <person name="Rose M."/>
            <person name="Sadaie Y."/>
            <person name="Sato T."/>
            <person name="Scanlan E."/>
            <person name="Schleich S."/>
            <person name="Schroeter R."/>
            <person name="Scoffone F."/>
            <person name="Sekiguchi J."/>
            <person name="Sekowska A."/>
            <person name="Seror S.J."/>
            <person name="Serror P."/>
            <person name="Shin B.-S."/>
            <person name="Soldo B."/>
            <person name="Sorokin A."/>
            <person name="Tacconi E."/>
            <person name="Takagi T."/>
            <person name="Takahashi H."/>
            <person name="Takemaru K."/>
            <person name="Takeuchi M."/>
            <person name="Tamakoshi A."/>
            <person name="Tanaka T."/>
            <person name="Terpstra P."/>
            <person name="Tognoni A."/>
            <person name="Tosato V."/>
            <person name="Uchiyama S."/>
            <person name="Vandenbol M."/>
            <person name="Vannier F."/>
            <person name="Vassarotti A."/>
            <person name="Viari A."/>
            <person name="Wambutt R."/>
            <person name="Wedler E."/>
            <person name="Wedler H."/>
            <person name="Weitzenegger T."/>
            <person name="Winters P."/>
            <person name="Wipat A."/>
            <person name="Yamamoto H."/>
            <person name="Yamane K."/>
            <person name="Yasumoto K."/>
            <person name="Yata K."/>
            <person name="Yoshida K."/>
            <person name="Yoshikawa H.-F."/>
            <person name="Zumstein E."/>
            <person name="Yoshikawa H."/>
            <person name="Danchin A."/>
        </authorList>
    </citation>
    <scope>NUCLEOTIDE SEQUENCE [LARGE SCALE GENOMIC DNA]</scope>
    <source>
        <strain>168</strain>
    </source>
</reference>
<reference key="3">
    <citation type="journal article" date="2005" name="Protein Expr. Purif.">
        <title>Cloning, expression, purification, and characterisation of the dUTPase encoded by the integrated Bacillus subtilis temperate bacteriophage SPbeta.</title>
        <authorList>
            <person name="Persson R."/>
            <person name="McGeehan J."/>
            <person name="Wilson K.S."/>
        </authorList>
    </citation>
    <scope>CATALYTIC ACTIVITY</scope>
    <scope>BIOPHYSICOCHEMICAL PROPERTIES</scope>
    <scope>COFACTOR</scope>
    <scope>SUBUNIT</scope>
    <source>
        <strain>168</strain>
    </source>
</reference>
<reference key="4">
    <citation type="journal article" date="2007" name="J. Bacteriol.">
        <title>Essential bacterial functions encoded by gene pairs.</title>
        <authorList>
            <person name="Thomaides H.B."/>
            <person name="Davison E.J."/>
            <person name="Burston L."/>
            <person name="Johnson H."/>
            <person name="Brown D.R."/>
            <person name="Hunt A.C."/>
            <person name="Errington J."/>
            <person name="Czaplewski L."/>
        </authorList>
    </citation>
    <scope>DISRUPTION PHENOTYPE</scope>
    <source>
        <strain>168</strain>
    </source>
</reference>
<reference key="5">
    <citation type="journal article" date="2001" name="Acta Crystallogr. D">
        <title>Crystallization and preliminary crystallographic analysis of deoxyuridine 5'-triphosphate nucleotidohydrolase from Bacillus subtilis.</title>
        <authorList>
            <person name="Persson R."/>
            <person name="Harkiolaki M."/>
            <person name="McGeehan J."/>
            <person name="Wilson K.S."/>
        </authorList>
    </citation>
    <scope>PRELIMINARY CRYSTALLIZATION</scope>
</reference>
<reference key="6">
    <citation type="journal article" date="2009" name="Acta Crystallogr. F">
        <title>Crystallization and preliminary X-ray analysis of three dUTPases from Gram-positive bacteria.</title>
        <authorList>
            <person name="Li G.-L."/>
            <person name="Wang J."/>
            <person name="Li L.-F."/>
            <person name="Su X.-D."/>
        </authorList>
    </citation>
    <scope>X-RAY CRYSTALLOGRAPHY (2.3 ANGSTROMS)</scope>
</reference>
<reference evidence="10 11 12" key="7">
    <citation type="journal article" date="2011" name="Acta Crystallogr. D">
        <title>The structure of Bacillus subtilis SPbeta prophage dUTPase and its complexes with two nucleotides.</title>
        <authorList>
            <person name="Garcia-Nafria J."/>
            <person name="Harkiolaki M."/>
            <person name="Persson R."/>
            <person name="Fogg M.J."/>
            <person name="Wilson K.S."/>
        </authorList>
    </citation>
    <scope>X-RAY CRYSTALLOGRAPHY (1.74 ANGSTROMS) ALONE AND IN COMPLEX WITH SUBSTRATE ANALOGS</scope>
    <scope>PROBABLE ACTIVE SITE</scope>
    <scope>COFACTOR</scope>
    <scope>SUBUNIT</scope>
    <scope>DOMAIN</scope>
    <source>
        <strain>168</strain>
    </source>
</reference>
<reference evidence="13" key="8">
    <citation type="journal article" date="2013" name="Acta Crystallogr. D">
        <title>Tying down the arm in Bacillus dUTPase: structure and mechanism.</title>
        <authorList>
            <person name="Garcia-Nafria J."/>
            <person name="Timm J."/>
            <person name="Harrison C."/>
            <person name="Turkenburg J.P."/>
            <person name="Wilson K.S."/>
        </authorList>
    </citation>
    <scope>X-RAY CRYSTALLOGRAPHY (1.60 ANGSTROMS) IN COMPLEX WITH DUMP</scope>
    <scope>PROBABLE ACTIVE SITE</scope>
    <scope>COFACTOR</scope>
    <scope>SUBUNIT</scope>
</reference>
<comment type="function">
    <text evidence="3 5">Involved in nucleotide metabolism: produces dUMP, the immediate precursor of thymidine nucleotides and decreases the intracellular concentration of dUTP, so that uracil cannot be incorporated into DNA (PubMed:9679200). The Ser-62 side chain changes its position upon ligand-binding to make contacts with the nucleotide phosphates (PubMed:21358047).</text>
</comment>
<comment type="catalytic activity">
    <reaction evidence="1">
        <text>dUTP + H2O = dUMP + diphosphate + H(+)</text>
        <dbReference type="Rhea" id="RHEA:10248"/>
        <dbReference type="ChEBI" id="CHEBI:15377"/>
        <dbReference type="ChEBI" id="CHEBI:15378"/>
        <dbReference type="ChEBI" id="CHEBI:33019"/>
        <dbReference type="ChEBI" id="CHEBI:61555"/>
        <dbReference type="ChEBI" id="CHEBI:246422"/>
        <dbReference type="EC" id="3.6.1.23"/>
    </reaction>
</comment>
<comment type="cofactor">
    <cofactor evidence="1 3">
        <name>Mg(2+)</name>
        <dbReference type="ChEBI" id="CHEBI:18420"/>
    </cofactor>
    <text evidence="3">Binds 1 Mg(2+) per subunit, coordinated entirely by the nucleotide and ordered water molecules.</text>
</comment>
<comment type="biophysicochemical properties">
    <kinetics>
        <KM evidence="1">0.6 uM for dUTP</KM>
    </kinetics>
    <phDependence>
        <text evidence="1">Optimum pH is 5.5.</text>
    </phDependence>
</comment>
<comment type="pathway">
    <text>Pyrimidine metabolism; dUMP biosynthesis; dUMP from dCTP (dUTP route): step 2/2.</text>
</comment>
<comment type="subunit">
    <text evidence="1 3 4">Homotrimer.</text>
</comment>
<comment type="domain">
    <text evidence="3">The uracil deoxyribose moiety interacts with the protein through Ile-79 and Tyr-83, which discriminate against the ribose form of the nucleotide.</text>
</comment>
<comment type="disruption phenotype">
    <text evidence="2">No visible phenotype; double yncF-yosS deletions (both encode dUTPases) are also viable.</text>
</comment>
<comment type="similarity">
    <text evidence="7">Belongs to the dUTPase family.</text>
</comment>
<proteinExistence type="evidence at protein level"/>
<protein>
    <recommendedName>
        <fullName>SPbeta prophage-derived deoxyuridine 5'-triphosphate nucleotidohydrolase YosS</fullName>
        <shortName evidence="6">dUTPase</shortName>
        <ecNumber evidence="1">3.6.1.23</ecNumber>
    </recommendedName>
    <alternativeName>
        <fullName>dUTP pyrophosphatase</fullName>
    </alternativeName>
</protein>
<name>YOSS_BACSU</name>
<feature type="chain" id="PRO_0000389002" description="SPbeta prophage-derived deoxyuridine 5'-triphosphate nucleotidohydrolase YosS">
    <location>
        <begin position="1"/>
        <end position="142"/>
    </location>
</feature>
<feature type="active site" description="Proton acceptor" evidence="8 9">
    <location>
        <position position="80"/>
    </location>
</feature>
<feature type="binding site" evidence="4 13">
    <location>
        <position position="62"/>
    </location>
    <ligand>
        <name>dUMP</name>
        <dbReference type="ChEBI" id="CHEBI:246422"/>
    </ligand>
</feature>
<feature type="binding site" evidence="4 13">
    <location>
        <position position="74"/>
    </location>
    <ligand>
        <name>dUMP</name>
        <dbReference type="ChEBI" id="CHEBI:246422"/>
    </ligand>
</feature>
<feature type="binding site" evidence="4 13">
    <location>
        <position position="83"/>
    </location>
    <ligand>
        <name>dUMP</name>
        <dbReference type="ChEBI" id="CHEBI:246422"/>
    </ligand>
</feature>
<feature type="binding site" evidence="4 13">
    <location>
        <position position="91"/>
    </location>
    <ligand>
        <name>dUMP</name>
        <dbReference type="ChEBI" id="CHEBI:246422"/>
    </ligand>
</feature>
<feature type="strand" evidence="14">
    <location>
        <begin position="2"/>
        <end position="9"/>
    </location>
</feature>
<feature type="strand" evidence="14">
    <location>
        <begin position="18"/>
        <end position="20"/>
    </location>
</feature>
<feature type="strand" evidence="14">
    <location>
        <begin position="24"/>
        <end position="27"/>
    </location>
</feature>
<feature type="strand" evidence="14">
    <location>
        <begin position="32"/>
        <end position="34"/>
    </location>
</feature>
<feature type="strand" evidence="14">
    <location>
        <begin position="39"/>
        <end position="49"/>
    </location>
</feature>
<feature type="strand" evidence="14">
    <location>
        <begin position="54"/>
        <end position="60"/>
    </location>
</feature>
<feature type="helix" evidence="14">
    <location>
        <begin position="64"/>
        <end position="68"/>
    </location>
</feature>
<feature type="strand" evidence="14">
    <location>
        <begin position="70"/>
        <end position="72"/>
    </location>
</feature>
<feature type="strand" evidence="14">
    <location>
        <begin position="75"/>
        <end position="80"/>
    </location>
</feature>
<feature type="strand" evidence="14">
    <location>
        <begin position="89"/>
        <end position="98"/>
    </location>
</feature>
<feature type="strand" evidence="14">
    <location>
        <begin position="100"/>
        <end position="102"/>
    </location>
</feature>
<feature type="strand" evidence="14">
    <location>
        <begin position="107"/>
        <end position="115"/>
    </location>
</feature>
<feature type="strand" evidence="14">
    <location>
        <begin position="120"/>
        <end position="124"/>
    </location>
</feature>
<keyword id="KW-0002">3D-structure</keyword>
<keyword id="KW-0378">Hydrolase</keyword>
<keyword id="KW-0460">Magnesium</keyword>
<keyword id="KW-0479">Metal-binding</keyword>
<keyword id="KW-0546">Nucleotide metabolism</keyword>
<keyword id="KW-1185">Reference proteome</keyword>
<gene>
    <name evidence="6" type="primary">yosS</name>
    <name type="synonym">yojU</name>
    <name type="ordered locus">BSU20020</name>
</gene>
<dbReference type="EC" id="3.6.1.23" evidence="1"/>
<dbReference type="EMBL" id="AF012906">
    <property type="protein sequence ID" value="AAB92488.1"/>
    <property type="molecule type" value="Genomic_DNA"/>
</dbReference>
<dbReference type="EMBL" id="AL009126">
    <property type="protein sequence ID" value="CAB13893.1"/>
    <property type="molecule type" value="Genomic_DNA"/>
</dbReference>
<dbReference type="PDB" id="2BAZ">
    <property type="method" value="X-ray"/>
    <property type="resolution" value="2.30 A"/>
    <property type="chains" value="A/B/C=1-142"/>
</dbReference>
<dbReference type="PDB" id="2XX6">
    <property type="method" value="X-ray"/>
    <property type="resolution" value="1.74 A"/>
    <property type="chains" value="A/B/C/D=1-142"/>
</dbReference>
<dbReference type="PDB" id="2XY3">
    <property type="method" value="X-ray"/>
    <property type="resolution" value="2.55 A"/>
    <property type="chains" value="A/B/C/D/E/F=1-142"/>
</dbReference>
<dbReference type="PDB" id="2Y1T">
    <property type="method" value="X-ray"/>
    <property type="resolution" value="1.89 A"/>
    <property type="chains" value="A/B/C/D/E/F=1-142"/>
</dbReference>
<dbReference type="PDB" id="4AO5">
    <property type="method" value="X-ray"/>
    <property type="resolution" value="1.60 A"/>
    <property type="chains" value="A/B/C/D/E/F=1-142"/>
</dbReference>
<dbReference type="PDBsum" id="2BAZ"/>
<dbReference type="PDBsum" id="2XX6"/>
<dbReference type="PDBsum" id="2XY3"/>
<dbReference type="PDBsum" id="2Y1T"/>
<dbReference type="PDBsum" id="4AO5"/>
<dbReference type="SMR" id="O34919"/>
<dbReference type="FunCoup" id="O34919">
    <property type="interactions" value="434"/>
</dbReference>
<dbReference type="STRING" id="224308.BSU20020"/>
<dbReference type="PaxDb" id="224308-BSU20020"/>
<dbReference type="EnsemblBacteria" id="CAB13893">
    <property type="protein sequence ID" value="CAB13893"/>
    <property type="gene ID" value="BSU_20020"/>
</dbReference>
<dbReference type="GeneID" id="939536"/>
<dbReference type="KEGG" id="bsu:BSU20020"/>
<dbReference type="PATRIC" id="fig|224308.179.peg.2190"/>
<dbReference type="eggNOG" id="COG0756">
    <property type="taxonomic scope" value="Bacteria"/>
</dbReference>
<dbReference type="InParanoid" id="O34919"/>
<dbReference type="OrthoDB" id="9809956at2"/>
<dbReference type="PhylomeDB" id="O34919"/>
<dbReference type="BioCyc" id="BSUB:BSU20020-MONOMER"/>
<dbReference type="BRENDA" id="3.6.1.23">
    <property type="organism ID" value="658"/>
</dbReference>
<dbReference type="UniPathway" id="UPA00610">
    <property type="reaction ID" value="UER00666"/>
</dbReference>
<dbReference type="EvolutionaryTrace" id="O34919"/>
<dbReference type="Proteomes" id="UP000001570">
    <property type="component" value="Chromosome"/>
</dbReference>
<dbReference type="GO" id="GO:0032991">
    <property type="term" value="C:protein-containing complex"/>
    <property type="evidence" value="ECO:0000314"/>
    <property type="project" value="UniProtKB"/>
</dbReference>
<dbReference type="GO" id="GO:0004170">
    <property type="term" value="F:dUTP diphosphatase activity"/>
    <property type="evidence" value="ECO:0000314"/>
    <property type="project" value="UniProtKB"/>
</dbReference>
<dbReference type="GO" id="GO:0042802">
    <property type="term" value="F:identical protein binding"/>
    <property type="evidence" value="ECO:0000353"/>
    <property type="project" value="UniProtKB"/>
</dbReference>
<dbReference type="GO" id="GO:0000287">
    <property type="term" value="F:magnesium ion binding"/>
    <property type="evidence" value="ECO:0000314"/>
    <property type="project" value="UniProtKB"/>
</dbReference>
<dbReference type="GO" id="GO:0006226">
    <property type="term" value="P:dUMP biosynthetic process"/>
    <property type="evidence" value="ECO:0000314"/>
    <property type="project" value="UniProtKB"/>
</dbReference>
<dbReference type="GO" id="GO:0046081">
    <property type="term" value="P:dUTP catabolic process"/>
    <property type="evidence" value="ECO:0000314"/>
    <property type="project" value="UniProtKB"/>
</dbReference>
<dbReference type="CDD" id="cd07557">
    <property type="entry name" value="trimeric_dUTPase"/>
    <property type="match status" value="1"/>
</dbReference>
<dbReference type="FunFam" id="2.70.40.10:FF:000017">
    <property type="entry name" value="dUTPase"/>
    <property type="match status" value="1"/>
</dbReference>
<dbReference type="Gene3D" id="2.70.40.10">
    <property type="match status" value="1"/>
</dbReference>
<dbReference type="InterPro" id="IPR008181">
    <property type="entry name" value="dUTPase"/>
</dbReference>
<dbReference type="InterPro" id="IPR029054">
    <property type="entry name" value="dUTPase-like"/>
</dbReference>
<dbReference type="InterPro" id="IPR036157">
    <property type="entry name" value="dUTPase-like_sf"/>
</dbReference>
<dbReference type="InterPro" id="IPR033704">
    <property type="entry name" value="dUTPase_trimeric"/>
</dbReference>
<dbReference type="PANTHER" id="PTHR11241">
    <property type="entry name" value="DEOXYURIDINE 5'-TRIPHOSPHATE NUCLEOTIDOHYDROLASE"/>
    <property type="match status" value="1"/>
</dbReference>
<dbReference type="PANTHER" id="PTHR11241:SF0">
    <property type="entry name" value="DEOXYURIDINE 5'-TRIPHOSPHATE NUCLEOTIDOHYDROLASE"/>
    <property type="match status" value="1"/>
</dbReference>
<dbReference type="Pfam" id="PF00692">
    <property type="entry name" value="dUTPase"/>
    <property type="match status" value="1"/>
</dbReference>
<dbReference type="SUPFAM" id="SSF51283">
    <property type="entry name" value="dUTPase-like"/>
    <property type="match status" value="1"/>
</dbReference>